<comment type="function">
    <text evidence="1">NDH-1 shuttles electrons from NADH, via FMN and iron-sulfur (Fe-S) centers, to quinones in the respiratory chain. The immediate electron acceptor for the enzyme in this species is believed to be ubiquinone. Couples the redox reaction to proton translocation (for every two electrons transferred, four hydrogen ions are translocated across the cytoplasmic membrane), and thus conserves the redox energy in a proton gradient.</text>
</comment>
<comment type="catalytic activity">
    <reaction evidence="1">
        <text>a quinone + NADH + 5 H(+)(in) = a quinol + NAD(+) + 4 H(+)(out)</text>
        <dbReference type="Rhea" id="RHEA:57888"/>
        <dbReference type="ChEBI" id="CHEBI:15378"/>
        <dbReference type="ChEBI" id="CHEBI:24646"/>
        <dbReference type="ChEBI" id="CHEBI:57540"/>
        <dbReference type="ChEBI" id="CHEBI:57945"/>
        <dbReference type="ChEBI" id="CHEBI:132124"/>
    </reaction>
</comment>
<comment type="subunit">
    <text evidence="1">NDH-1 is composed of 14 different subunits. Subunits NuoB, C, D, E, F, and G constitute the peripheral sector of the complex.</text>
</comment>
<comment type="subcellular location">
    <subcellularLocation>
        <location evidence="1">Cell inner membrane</location>
        <topology evidence="1">Peripheral membrane protein</topology>
        <orientation evidence="1">Cytoplasmic side</orientation>
    </subcellularLocation>
</comment>
<comment type="similarity">
    <text evidence="1">Belongs to the complex I 30 kDa subunit family.</text>
</comment>
<keyword id="KW-0997">Cell inner membrane</keyword>
<keyword id="KW-1003">Cell membrane</keyword>
<keyword id="KW-0472">Membrane</keyword>
<keyword id="KW-0520">NAD</keyword>
<keyword id="KW-0874">Quinone</keyword>
<keyword id="KW-1185">Reference proteome</keyword>
<keyword id="KW-1278">Translocase</keyword>
<keyword id="KW-0813">Transport</keyword>
<keyword id="KW-0830">Ubiquinone</keyword>
<proteinExistence type="inferred from homology"/>
<reference key="1">
    <citation type="journal article" date="2006" name="J. Bacteriol.">
        <title>The genome sequence of the obligately chemolithoautotrophic, facultatively anaerobic bacterium Thiobacillus denitrificans.</title>
        <authorList>
            <person name="Beller H.R."/>
            <person name="Chain P.S."/>
            <person name="Letain T.E."/>
            <person name="Chakicherla A."/>
            <person name="Larimer F.W."/>
            <person name="Richardson P.M."/>
            <person name="Coleman M.A."/>
            <person name="Wood A.P."/>
            <person name="Kelly D.P."/>
        </authorList>
    </citation>
    <scope>NUCLEOTIDE SEQUENCE [LARGE SCALE GENOMIC DNA]</scope>
    <source>
        <strain>ATCC 25259 / T1</strain>
    </source>
</reference>
<protein>
    <recommendedName>
        <fullName evidence="1">NADH-quinone oxidoreductase subunit C</fullName>
        <ecNumber evidence="1">7.1.1.-</ecNumber>
    </recommendedName>
    <alternativeName>
        <fullName evidence="1">NADH dehydrogenase I subunit C</fullName>
    </alternativeName>
    <alternativeName>
        <fullName evidence="1">NDH-1 subunit C</fullName>
    </alternativeName>
</protein>
<evidence type="ECO:0000255" key="1">
    <source>
        <dbReference type="HAMAP-Rule" id="MF_01357"/>
    </source>
</evidence>
<organism>
    <name type="scientific">Thiobacillus denitrificans (strain ATCC 25259 / T1)</name>
    <dbReference type="NCBI Taxonomy" id="292415"/>
    <lineage>
        <taxon>Bacteria</taxon>
        <taxon>Pseudomonadati</taxon>
        <taxon>Pseudomonadota</taxon>
        <taxon>Betaproteobacteria</taxon>
        <taxon>Nitrosomonadales</taxon>
        <taxon>Thiobacillaceae</taxon>
        <taxon>Thiobacillus</taxon>
    </lineage>
</organism>
<sequence>MSITLESLSACLKNALGDALVQTIERLGELTLVVKPQAYAPAMLALRDHPDCRFEQLIDLCGVDYSGYGEGAWEGPRFAVVAHLLSVSKNARVRVRVFCPDDDLPAVASVVDIWPAASWFEREAFDLYGIVFEGHPDLRRILTDYGFIGHPFRKDFPLSGNVEMRYDPTQQRVIYQPVSIEPRDNVPRVVRDESYGDGRA</sequence>
<feature type="chain" id="PRO_0000358216" description="NADH-quinone oxidoreductase subunit C">
    <location>
        <begin position="1"/>
        <end position="200"/>
    </location>
</feature>
<name>NUOC_THIDA</name>
<gene>
    <name evidence="1" type="primary">nuoC</name>
    <name type="ordered locus">Tbd_1144</name>
</gene>
<dbReference type="EC" id="7.1.1.-" evidence="1"/>
<dbReference type="EMBL" id="CP000116">
    <property type="protein sequence ID" value="AAZ97097.1"/>
    <property type="molecule type" value="Genomic_DNA"/>
</dbReference>
<dbReference type="RefSeq" id="WP_011311656.1">
    <property type="nucleotide sequence ID" value="NC_007404.1"/>
</dbReference>
<dbReference type="SMR" id="Q3SEX6"/>
<dbReference type="STRING" id="292415.Tbd_1144"/>
<dbReference type="KEGG" id="tbd:Tbd_1144"/>
<dbReference type="eggNOG" id="COG0852">
    <property type="taxonomic scope" value="Bacteria"/>
</dbReference>
<dbReference type="HOGENOM" id="CLU_042628_2_1_4"/>
<dbReference type="OrthoDB" id="9803286at2"/>
<dbReference type="Proteomes" id="UP000008291">
    <property type="component" value="Chromosome"/>
</dbReference>
<dbReference type="GO" id="GO:0005886">
    <property type="term" value="C:plasma membrane"/>
    <property type="evidence" value="ECO:0007669"/>
    <property type="project" value="UniProtKB-SubCell"/>
</dbReference>
<dbReference type="GO" id="GO:0008137">
    <property type="term" value="F:NADH dehydrogenase (ubiquinone) activity"/>
    <property type="evidence" value="ECO:0007669"/>
    <property type="project" value="InterPro"/>
</dbReference>
<dbReference type="GO" id="GO:0050136">
    <property type="term" value="F:NADH:ubiquinone reductase (non-electrogenic) activity"/>
    <property type="evidence" value="ECO:0007669"/>
    <property type="project" value="UniProtKB-UniRule"/>
</dbReference>
<dbReference type="GO" id="GO:0048038">
    <property type="term" value="F:quinone binding"/>
    <property type="evidence" value="ECO:0007669"/>
    <property type="project" value="UniProtKB-KW"/>
</dbReference>
<dbReference type="Gene3D" id="3.30.460.80">
    <property type="entry name" value="NADH:ubiquinone oxidoreductase, 30kDa subunit"/>
    <property type="match status" value="1"/>
</dbReference>
<dbReference type="HAMAP" id="MF_01357">
    <property type="entry name" value="NDH1_NuoC"/>
    <property type="match status" value="1"/>
</dbReference>
<dbReference type="InterPro" id="IPR010218">
    <property type="entry name" value="NADH_DH_suC"/>
</dbReference>
<dbReference type="InterPro" id="IPR037232">
    <property type="entry name" value="NADH_quin_OxRdtase_su_C/D-like"/>
</dbReference>
<dbReference type="InterPro" id="IPR001268">
    <property type="entry name" value="NADH_UbQ_OxRdtase_30kDa_su"/>
</dbReference>
<dbReference type="InterPro" id="IPR020396">
    <property type="entry name" value="NADH_UbQ_OxRdtase_CS"/>
</dbReference>
<dbReference type="NCBIfam" id="TIGR01961">
    <property type="entry name" value="NuoC_fam"/>
    <property type="match status" value="1"/>
</dbReference>
<dbReference type="NCBIfam" id="NF004730">
    <property type="entry name" value="PRK06074.1-1"/>
    <property type="match status" value="1"/>
</dbReference>
<dbReference type="PANTHER" id="PTHR10884:SF14">
    <property type="entry name" value="NADH DEHYDROGENASE [UBIQUINONE] IRON-SULFUR PROTEIN 3, MITOCHONDRIAL"/>
    <property type="match status" value="1"/>
</dbReference>
<dbReference type="PANTHER" id="PTHR10884">
    <property type="entry name" value="NADH DEHYDROGENASE UBIQUINONE IRON-SULFUR PROTEIN 3"/>
    <property type="match status" value="1"/>
</dbReference>
<dbReference type="Pfam" id="PF00329">
    <property type="entry name" value="Complex1_30kDa"/>
    <property type="match status" value="1"/>
</dbReference>
<dbReference type="SUPFAM" id="SSF143243">
    <property type="entry name" value="Nqo5-like"/>
    <property type="match status" value="1"/>
</dbReference>
<dbReference type="PROSITE" id="PS00542">
    <property type="entry name" value="COMPLEX1_30K"/>
    <property type="match status" value="1"/>
</dbReference>
<accession>Q3SEX6</accession>